<sequence length="360" mass="40797">METKEFDSYSERKAFDETKTGVKGLIDAHITEIPRIFCLPQGSLSDKKPFVSTTDFAIPIIDFEGLHVSREDIVGKIKDAASNWGFFQVINHGVPLNVLQEIQDGVRRFHEEAPEVKKTYFTRDATKRFVYNSNFDLYSSSSCVNWRDSFACYMAPDPPNPEDLPVACRVAMFEYSKHMMRLGDLLFELLSEALGLRSDKLKSMDCMKGLLLLCHYYPPCPQPDLTIGTNNHSDNSFLTILLQDQIGGLQIFHQDCWVDVSPIPGALVINMGDFLQLITNDKVISVEHRVLANRAATPRISVASFFSTSMRPNSTVYGPIKELLSEENPSKYRVIDLKEYTEGYFKKGLDGTSYLSHYKI</sequence>
<keyword id="KW-0408">Iron</keyword>
<keyword id="KW-0479">Metal-binding</keyword>
<keyword id="KW-0560">Oxidoreductase</keyword>
<keyword id="KW-1185">Reference proteome</keyword>
<protein>
    <recommendedName>
        <fullName>1-aminocyclopropane-1-carboxylate oxidase homolog 6</fullName>
        <ecNumber>1.14.-.-</ecNumber>
    </recommendedName>
</protein>
<evidence type="ECO:0000255" key="1">
    <source>
        <dbReference type="PROSITE-ProRule" id="PRU00805"/>
    </source>
</evidence>
<evidence type="ECO:0000269" key="2">
    <source>
    </source>
</evidence>
<evidence type="ECO:0000305" key="3"/>
<name>ACCH6_ARATH</name>
<gene>
    <name type="ordered locus">At1g04350</name>
    <name type="ORF">F19P19.22</name>
</gene>
<proteinExistence type="evidence at transcript level"/>
<comment type="cofactor">
    <cofactor evidence="1">
        <name>Fe(2+)</name>
        <dbReference type="ChEBI" id="CHEBI:29033"/>
    </cofactor>
    <text evidence="1">Binds 1 Fe(2+) ion per subunit.</text>
</comment>
<comment type="tissue specificity">
    <text evidence="2">Constitutively expressed in leaves and blades.</text>
</comment>
<comment type="similarity">
    <text evidence="3">Belongs to the iron/ascorbate-dependent oxidoreductase family.</text>
</comment>
<organism>
    <name type="scientific">Arabidopsis thaliana</name>
    <name type="common">Mouse-ear cress</name>
    <dbReference type="NCBI Taxonomy" id="3702"/>
    <lineage>
        <taxon>Eukaryota</taxon>
        <taxon>Viridiplantae</taxon>
        <taxon>Streptophyta</taxon>
        <taxon>Embryophyta</taxon>
        <taxon>Tracheophyta</taxon>
        <taxon>Spermatophyta</taxon>
        <taxon>Magnoliopsida</taxon>
        <taxon>eudicotyledons</taxon>
        <taxon>Gunneridae</taxon>
        <taxon>Pentapetalae</taxon>
        <taxon>rosids</taxon>
        <taxon>malvids</taxon>
        <taxon>Brassicales</taxon>
        <taxon>Brassicaceae</taxon>
        <taxon>Camelineae</taxon>
        <taxon>Arabidopsis</taxon>
    </lineage>
</organism>
<feature type="chain" id="PRO_0000408281" description="1-aminocyclopropane-1-carboxylate oxidase homolog 6">
    <location>
        <begin position="1"/>
        <end position="360"/>
    </location>
</feature>
<feature type="domain" description="Fe2OG dioxygenase" evidence="1">
    <location>
        <begin position="208"/>
        <end position="309"/>
    </location>
</feature>
<feature type="binding site" evidence="1">
    <location>
        <position position="232"/>
    </location>
    <ligand>
        <name>Fe cation</name>
        <dbReference type="ChEBI" id="CHEBI:24875"/>
    </ligand>
</feature>
<feature type="binding site" evidence="1">
    <location>
        <position position="234"/>
    </location>
    <ligand>
        <name>Fe cation</name>
        <dbReference type="ChEBI" id="CHEBI:24875"/>
    </ligand>
</feature>
<feature type="binding site" evidence="1">
    <location>
        <position position="288"/>
    </location>
    <ligand>
        <name>Fe cation</name>
        <dbReference type="ChEBI" id="CHEBI:24875"/>
    </ligand>
</feature>
<feature type="binding site" evidence="1">
    <location>
        <position position="299"/>
    </location>
    <ligand>
        <name>2-oxoglutarate</name>
        <dbReference type="ChEBI" id="CHEBI:16810"/>
    </ligand>
</feature>
<dbReference type="EC" id="1.14.-.-"/>
<dbReference type="EMBL" id="AC000104">
    <property type="protein sequence ID" value="AAB70442.1"/>
    <property type="molecule type" value="Genomic_DNA"/>
</dbReference>
<dbReference type="EMBL" id="CP002684">
    <property type="protein sequence ID" value="AEE27687.1"/>
    <property type="molecule type" value="Genomic_DNA"/>
</dbReference>
<dbReference type="EMBL" id="AY050921">
    <property type="protein sequence ID" value="AAK93598.1"/>
    <property type="molecule type" value="mRNA"/>
</dbReference>
<dbReference type="EMBL" id="AY113969">
    <property type="protein sequence ID" value="AAM45017.1"/>
    <property type="molecule type" value="mRNA"/>
</dbReference>
<dbReference type="EMBL" id="BT000698">
    <property type="protein sequence ID" value="AAN31842.1"/>
    <property type="molecule type" value="mRNA"/>
</dbReference>
<dbReference type="EMBL" id="AK226341">
    <property type="protein sequence ID" value="BAE98490.1"/>
    <property type="molecule type" value="mRNA"/>
</dbReference>
<dbReference type="PIR" id="A86175">
    <property type="entry name" value="A86175"/>
</dbReference>
<dbReference type="RefSeq" id="NP_171930.1">
    <property type="nucleotide sequence ID" value="NM_100315.4"/>
</dbReference>
<dbReference type="SMR" id="P93824"/>
<dbReference type="FunCoup" id="P93824">
    <property type="interactions" value="146"/>
</dbReference>
<dbReference type="STRING" id="3702.P93824"/>
<dbReference type="iPTMnet" id="P93824"/>
<dbReference type="PaxDb" id="3702-AT1G04350.1"/>
<dbReference type="ProteomicsDB" id="243278"/>
<dbReference type="EnsemblPlants" id="AT1G04350.1">
    <property type="protein sequence ID" value="AT1G04350.1"/>
    <property type="gene ID" value="AT1G04350"/>
</dbReference>
<dbReference type="GeneID" id="839542"/>
<dbReference type="Gramene" id="AT1G04350.1">
    <property type="protein sequence ID" value="AT1G04350.1"/>
    <property type="gene ID" value="AT1G04350"/>
</dbReference>
<dbReference type="KEGG" id="ath:AT1G04350"/>
<dbReference type="Araport" id="AT1G04350"/>
<dbReference type="TAIR" id="AT1G04350"/>
<dbReference type="eggNOG" id="KOG0143">
    <property type="taxonomic scope" value="Eukaryota"/>
</dbReference>
<dbReference type="HOGENOM" id="CLU_010119_0_0_1"/>
<dbReference type="InParanoid" id="P93824"/>
<dbReference type="OMA" id="SSSCVNW"/>
<dbReference type="OrthoDB" id="288590at2759"/>
<dbReference type="PhylomeDB" id="P93824"/>
<dbReference type="BioCyc" id="ARA:AT1G04350-MONOMER"/>
<dbReference type="PRO" id="PR:P93824"/>
<dbReference type="Proteomes" id="UP000006548">
    <property type="component" value="Chromosome 1"/>
</dbReference>
<dbReference type="ExpressionAtlas" id="P93824">
    <property type="expression patterns" value="baseline and differential"/>
</dbReference>
<dbReference type="GO" id="GO:0005576">
    <property type="term" value="C:extracellular region"/>
    <property type="evidence" value="ECO:0007005"/>
    <property type="project" value="TAIR"/>
</dbReference>
<dbReference type="GO" id="GO:0051213">
    <property type="term" value="F:dioxygenase activity"/>
    <property type="evidence" value="ECO:0007669"/>
    <property type="project" value="UniProtKB-ARBA"/>
</dbReference>
<dbReference type="GO" id="GO:0046872">
    <property type="term" value="F:metal ion binding"/>
    <property type="evidence" value="ECO:0007669"/>
    <property type="project" value="UniProtKB-KW"/>
</dbReference>
<dbReference type="GO" id="GO:0009058">
    <property type="term" value="P:biosynthetic process"/>
    <property type="evidence" value="ECO:0007669"/>
    <property type="project" value="UniProtKB-ARBA"/>
</dbReference>
<dbReference type="FunFam" id="2.60.120.330:FF:000005">
    <property type="entry name" value="1-aminocyclopropane-1-carboxylate oxidase homolog 1"/>
    <property type="match status" value="1"/>
</dbReference>
<dbReference type="Gene3D" id="2.60.120.330">
    <property type="entry name" value="B-lactam Antibiotic, Isopenicillin N Synthase, Chain"/>
    <property type="match status" value="1"/>
</dbReference>
<dbReference type="InterPro" id="IPR026992">
    <property type="entry name" value="DIOX_N"/>
</dbReference>
<dbReference type="InterPro" id="IPR044861">
    <property type="entry name" value="IPNS-like_FE2OG_OXY"/>
</dbReference>
<dbReference type="InterPro" id="IPR027443">
    <property type="entry name" value="IPNS-like_sf"/>
</dbReference>
<dbReference type="InterPro" id="IPR005123">
    <property type="entry name" value="Oxoglu/Fe-dep_dioxygenase_dom"/>
</dbReference>
<dbReference type="PANTHER" id="PTHR10209:SF712">
    <property type="entry name" value="1-AMINOCYCLOPROPANE-1-CARBOXYLATE OXIDASE HOMOLOG 6"/>
    <property type="match status" value="1"/>
</dbReference>
<dbReference type="PANTHER" id="PTHR10209">
    <property type="entry name" value="OXIDOREDUCTASE, 2OG-FE II OXYGENASE FAMILY PROTEIN"/>
    <property type="match status" value="1"/>
</dbReference>
<dbReference type="Pfam" id="PF03171">
    <property type="entry name" value="2OG-FeII_Oxy"/>
    <property type="match status" value="1"/>
</dbReference>
<dbReference type="Pfam" id="PF14226">
    <property type="entry name" value="DIOX_N"/>
    <property type="match status" value="1"/>
</dbReference>
<dbReference type="SUPFAM" id="SSF51197">
    <property type="entry name" value="Clavaminate synthase-like"/>
    <property type="match status" value="1"/>
</dbReference>
<dbReference type="PROSITE" id="PS51471">
    <property type="entry name" value="FE2OG_OXY"/>
    <property type="match status" value="1"/>
</dbReference>
<accession>P93824</accession>
<reference key="1">
    <citation type="journal article" date="2000" name="Nature">
        <title>Sequence and analysis of chromosome 1 of the plant Arabidopsis thaliana.</title>
        <authorList>
            <person name="Theologis A."/>
            <person name="Ecker J.R."/>
            <person name="Palm C.J."/>
            <person name="Federspiel N.A."/>
            <person name="Kaul S."/>
            <person name="White O."/>
            <person name="Alonso J."/>
            <person name="Altafi H."/>
            <person name="Araujo R."/>
            <person name="Bowman C.L."/>
            <person name="Brooks S.Y."/>
            <person name="Buehler E."/>
            <person name="Chan A."/>
            <person name="Chao Q."/>
            <person name="Chen H."/>
            <person name="Cheuk R.F."/>
            <person name="Chin C.W."/>
            <person name="Chung M.K."/>
            <person name="Conn L."/>
            <person name="Conway A.B."/>
            <person name="Conway A.R."/>
            <person name="Creasy T.H."/>
            <person name="Dewar K."/>
            <person name="Dunn P."/>
            <person name="Etgu P."/>
            <person name="Feldblyum T.V."/>
            <person name="Feng J.-D."/>
            <person name="Fong B."/>
            <person name="Fujii C.Y."/>
            <person name="Gill J.E."/>
            <person name="Goldsmith A.D."/>
            <person name="Haas B."/>
            <person name="Hansen N.F."/>
            <person name="Hughes B."/>
            <person name="Huizar L."/>
            <person name="Hunter J.L."/>
            <person name="Jenkins J."/>
            <person name="Johnson-Hopson C."/>
            <person name="Khan S."/>
            <person name="Khaykin E."/>
            <person name="Kim C.J."/>
            <person name="Koo H.L."/>
            <person name="Kremenetskaia I."/>
            <person name="Kurtz D.B."/>
            <person name="Kwan A."/>
            <person name="Lam B."/>
            <person name="Langin-Hooper S."/>
            <person name="Lee A."/>
            <person name="Lee J.M."/>
            <person name="Lenz C.A."/>
            <person name="Li J.H."/>
            <person name="Li Y.-P."/>
            <person name="Lin X."/>
            <person name="Liu S.X."/>
            <person name="Liu Z.A."/>
            <person name="Luros J.S."/>
            <person name="Maiti R."/>
            <person name="Marziali A."/>
            <person name="Militscher J."/>
            <person name="Miranda M."/>
            <person name="Nguyen M."/>
            <person name="Nierman W.C."/>
            <person name="Osborne B.I."/>
            <person name="Pai G."/>
            <person name="Peterson J."/>
            <person name="Pham P.K."/>
            <person name="Rizzo M."/>
            <person name="Rooney T."/>
            <person name="Rowley D."/>
            <person name="Sakano H."/>
            <person name="Salzberg S.L."/>
            <person name="Schwartz J.R."/>
            <person name="Shinn P."/>
            <person name="Southwick A.M."/>
            <person name="Sun H."/>
            <person name="Tallon L.J."/>
            <person name="Tambunga G."/>
            <person name="Toriumi M.J."/>
            <person name="Town C.D."/>
            <person name="Utterback T."/>
            <person name="Van Aken S."/>
            <person name="Vaysberg M."/>
            <person name="Vysotskaia V.S."/>
            <person name="Walker M."/>
            <person name="Wu D."/>
            <person name="Yu G."/>
            <person name="Fraser C.M."/>
            <person name="Venter J.C."/>
            <person name="Davis R.W."/>
        </authorList>
    </citation>
    <scope>NUCLEOTIDE SEQUENCE [LARGE SCALE GENOMIC DNA]</scope>
    <source>
        <strain>cv. Columbia</strain>
    </source>
</reference>
<reference key="2">
    <citation type="journal article" date="2017" name="Plant J.">
        <title>Araport11: a complete reannotation of the Arabidopsis thaliana reference genome.</title>
        <authorList>
            <person name="Cheng C.Y."/>
            <person name="Krishnakumar V."/>
            <person name="Chan A.P."/>
            <person name="Thibaud-Nissen F."/>
            <person name="Schobel S."/>
            <person name="Town C.D."/>
        </authorList>
    </citation>
    <scope>GENOME REANNOTATION</scope>
    <source>
        <strain>cv. Columbia</strain>
    </source>
</reference>
<reference key="3">
    <citation type="journal article" date="2003" name="Science">
        <title>Empirical analysis of transcriptional activity in the Arabidopsis genome.</title>
        <authorList>
            <person name="Yamada K."/>
            <person name="Lim J."/>
            <person name="Dale J.M."/>
            <person name="Chen H."/>
            <person name="Shinn P."/>
            <person name="Palm C.J."/>
            <person name="Southwick A.M."/>
            <person name="Wu H.C."/>
            <person name="Kim C.J."/>
            <person name="Nguyen M."/>
            <person name="Pham P.K."/>
            <person name="Cheuk R.F."/>
            <person name="Karlin-Newmann G."/>
            <person name="Liu S.X."/>
            <person name="Lam B."/>
            <person name="Sakano H."/>
            <person name="Wu T."/>
            <person name="Yu G."/>
            <person name="Miranda M."/>
            <person name="Quach H.L."/>
            <person name="Tripp M."/>
            <person name="Chang C.H."/>
            <person name="Lee J.M."/>
            <person name="Toriumi M.J."/>
            <person name="Chan M.M."/>
            <person name="Tang C.C."/>
            <person name="Onodera C.S."/>
            <person name="Deng J.M."/>
            <person name="Akiyama K."/>
            <person name="Ansari Y."/>
            <person name="Arakawa T."/>
            <person name="Banh J."/>
            <person name="Banno F."/>
            <person name="Bowser L."/>
            <person name="Brooks S.Y."/>
            <person name="Carninci P."/>
            <person name="Chao Q."/>
            <person name="Choy N."/>
            <person name="Enju A."/>
            <person name="Goldsmith A.D."/>
            <person name="Gurjal M."/>
            <person name="Hansen N.F."/>
            <person name="Hayashizaki Y."/>
            <person name="Johnson-Hopson C."/>
            <person name="Hsuan V.W."/>
            <person name="Iida K."/>
            <person name="Karnes M."/>
            <person name="Khan S."/>
            <person name="Koesema E."/>
            <person name="Ishida J."/>
            <person name="Jiang P.X."/>
            <person name="Jones T."/>
            <person name="Kawai J."/>
            <person name="Kamiya A."/>
            <person name="Meyers C."/>
            <person name="Nakajima M."/>
            <person name="Narusaka M."/>
            <person name="Seki M."/>
            <person name="Sakurai T."/>
            <person name="Satou M."/>
            <person name="Tamse R."/>
            <person name="Vaysberg M."/>
            <person name="Wallender E.K."/>
            <person name="Wong C."/>
            <person name="Yamamura Y."/>
            <person name="Yuan S."/>
            <person name="Shinozaki K."/>
            <person name="Davis R.W."/>
            <person name="Theologis A."/>
            <person name="Ecker J.R."/>
        </authorList>
    </citation>
    <scope>NUCLEOTIDE SEQUENCE [LARGE SCALE MRNA]</scope>
    <source>
        <strain>cv. Columbia</strain>
    </source>
</reference>
<reference key="4">
    <citation type="submission" date="2006-07" db="EMBL/GenBank/DDBJ databases">
        <title>Large-scale analysis of RIKEN Arabidopsis full-length (RAFL) cDNAs.</title>
        <authorList>
            <person name="Totoki Y."/>
            <person name="Seki M."/>
            <person name="Ishida J."/>
            <person name="Nakajima M."/>
            <person name="Enju A."/>
            <person name="Kamiya A."/>
            <person name="Narusaka M."/>
            <person name="Shin-i T."/>
            <person name="Nakagawa M."/>
            <person name="Sakamoto N."/>
            <person name="Oishi K."/>
            <person name="Kohara Y."/>
            <person name="Kobayashi M."/>
            <person name="Toyoda A."/>
            <person name="Sakaki Y."/>
            <person name="Sakurai T."/>
            <person name="Iida K."/>
            <person name="Akiyama K."/>
            <person name="Satou M."/>
            <person name="Toyoda T."/>
            <person name="Konagaya A."/>
            <person name="Carninci P."/>
            <person name="Kawai J."/>
            <person name="Hayashizaki Y."/>
            <person name="Shinozaki K."/>
        </authorList>
    </citation>
    <scope>NUCLEOTIDE SEQUENCE [LARGE SCALE MRNA]</scope>
    <source>
        <strain>cv. Columbia</strain>
    </source>
</reference>
<reference key="5">
    <citation type="journal article" date="2003" name="Plant Physiol.">
        <title>Ethylene and auxin control the Arabidopsis response to decreased light intensity.</title>
        <authorList>
            <person name="Vandenbussche F."/>
            <person name="Vriezen W.H."/>
            <person name="Smalle J."/>
            <person name="Laarhoven L.J.J."/>
            <person name="Harren F.J.M."/>
            <person name="Van Der Straeten D."/>
        </authorList>
    </citation>
    <scope>TISSUE SPECIFICITY</scope>
</reference>